<keyword id="KW-0414">Isoprene biosynthesis</keyword>
<keyword id="KW-0460">Magnesium</keyword>
<keyword id="KW-0479">Metal-binding</keyword>
<keyword id="KW-1185">Reference proteome</keyword>
<keyword id="KW-0784">Thiamine biosynthesis</keyword>
<keyword id="KW-0786">Thiamine pyrophosphate</keyword>
<keyword id="KW-0808">Transferase</keyword>
<accession>Q1GCG4</accession>
<gene>
    <name evidence="1" type="primary">dxs</name>
    <name type="ordered locus">TM1040_2920</name>
</gene>
<proteinExistence type="inferred from homology"/>
<organism>
    <name type="scientific">Ruegeria sp. (strain TM1040)</name>
    <name type="common">Silicibacter sp.</name>
    <dbReference type="NCBI Taxonomy" id="292414"/>
    <lineage>
        <taxon>Bacteria</taxon>
        <taxon>Pseudomonadati</taxon>
        <taxon>Pseudomonadota</taxon>
        <taxon>Alphaproteobacteria</taxon>
        <taxon>Rhodobacterales</taxon>
        <taxon>Roseobacteraceae</taxon>
        <taxon>Ruegeria</taxon>
    </lineage>
</organism>
<reference key="1">
    <citation type="submission" date="2006-05" db="EMBL/GenBank/DDBJ databases">
        <title>Complete sequence of chromosome of Silicibacter sp. TM1040.</title>
        <authorList>
            <consortium name="US DOE Joint Genome Institute"/>
            <person name="Copeland A."/>
            <person name="Lucas S."/>
            <person name="Lapidus A."/>
            <person name="Barry K."/>
            <person name="Detter J.C."/>
            <person name="Glavina del Rio T."/>
            <person name="Hammon N."/>
            <person name="Israni S."/>
            <person name="Dalin E."/>
            <person name="Tice H."/>
            <person name="Pitluck S."/>
            <person name="Brettin T."/>
            <person name="Bruce D."/>
            <person name="Han C."/>
            <person name="Tapia R."/>
            <person name="Goodwin L."/>
            <person name="Thompson L.S."/>
            <person name="Gilna P."/>
            <person name="Schmutz J."/>
            <person name="Larimer F."/>
            <person name="Land M."/>
            <person name="Hauser L."/>
            <person name="Kyrpides N."/>
            <person name="Kim E."/>
            <person name="Belas R."/>
            <person name="Moran M.A."/>
            <person name="Buchan A."/>
            <person name="Gonzalez J.M."/>
            <person name="Schell M.A."/>
            <person name="Sun F."/>
            <person name="Richardson P."/>
        </authorList>
    </citation>
    <scope>NUCLEOTIDE SEQUENCE [LARGE SCALE GENOMIC DNA]</scope>
    <source>
        <strain>TM1040</strain>
    </source>
</reference>
<sequence length="645" mass="68536">MTDRPQTPLLDQIASPADLKRLSDAQLEQVAHELRQETISAVSVTGGHLGAGLGVVELTVALHSVFDTPKDKVIWDVSHQCYPHKILTGRRDRIRTLRMKDGLSGFTKRSESAFDPFGAAHSSTSISAALGFSVARDLGGVTEEGLGDAIAVIGDGAMSAGMAFEAMNNAGHLGKRLIVILNDNEMSIAPPVGALSSYLSRLYTEAPFHDLKAAAKGAVSLLPEPFREGAKRAKDMLKGMAMGGTLFESLGFSYIGPIDGHDMDQLLPVLRTVKARAAGPILIHAVTKKGKGYRPAEVARDKGHATAKFDMVTGEQKKAPSNAPSYTSVFGKTLTDLAAQDSKICAVTAAMPDGTGLNLMAERYPSRTFDVGIAEQHGVTFAAALAAGGMKPFCAMYSTFLQRGYDQVVHDVAIQRLPVRFAIDRAGLVGADGATHAGSFDIAFMANLPGMVVMAAADEAELKHMVATAAAYDAGPIAFRYPRGEGEGVEMPEQPEVLEIGKGRIIEEGSRVALLSFGTRLGEVRKAAEALAARGITPTVADARFAKPLDRDMILSLAEKHEALITIEEGAVGGFGSHVAQLLSEEAVFDTGLKFRSMVLPDTFIDQASPKDMYDSAAMNAEHIEAKVLDVLGVARLDERRLPAS</sequence>
<feature type="chain" id="PRO_0000256487" description="1-deoxy-D-xylulose-5-phosphate synthase">
    <location>
        <begin position="1"/>
        <end position="645"/>
    </location>
</feature>
<feature type="binding site" evidence="1">
    <location>
        <position position="79"/>
    </location>
    <ligand>
        <name>thiamine diphosphate</name>
        <dbReference type="ChEBI" id="CHEBI:58937"/>
    </ligand>
</feature>
<feature type="binding site" evidence="1">
    <location>
        <begin position="120"/>
        <end position="122"/>
    </location>
    <ligand>
        <name>thiamine diphosphate</name>
        <dbReference type="ChEBI" id="CHEBI:58937"/>
    </ligand>
</feature>
<feature type="binding site" evidence="1">
    <location>
        <position position="155"/>
    </location>
    <ligand>
        <name>Mg(2+)</name>
        <dbReference type="ChEBI" id="CHEBI:18420"/>
    </ligand>
</feature>
<feature type="binding site" evidence="1">
    <location>
        <begin position="156"/>
        <end position="157"/>
    </location>
    <ligand>
        <name>thiamine diphosphate</name>
        <dbReference type="ChEBI" id="CHEBI:58937"/>
    </ligand>
</feature>
<feature type="binding site" evidence="1">
    <location>
        <position position="184"/>
    </location>
    <ligand>
        <name>Mg(2+)</name>
        <dbReference type="ChEBI" id="CHEBI:18420"/>
    </ligand>
</feature>
<feature type="binding site" evidence="1">
    <location>
        <position position="184"/>
    </location>
    <ligand>
        <name>thiamine diphosphate</name>
        <dbReference type="ChEBI" id="CHEBI:58937"/>
    </ligand>
</feature>
<feature type="binding site" evidence="1">
    <location>
        <position position="293"/>
    </location>
    <ligand>
        <name>thiamine diphosphate</name>
        <dbReference type="ChEBI" id="CHEBI:58937"/>
    </ligand>
</feature>
<feature type="binding site" evidence="1">
    <location>
        <position position="375"/>
    </location>
    <ligand>
        <name>thiamine diphosphate</name>
        <dbReference type="ChEBI" id="CHEBI:58937"/>
    </ligand>
</feature>
<protein>
    <recommendedName>
        <fullName evidence="1">1-deoxy-D-xylulose-5-phosphate synthase</fullName>
        <ecNumber evidence="1">2.2.1.7</ecNumber>
    </recommendedName>
    <alternativeName>
        <fullName evidence="1">1-deoxyxylulose-5-phosphate synthase</fullName>
        <shortName evidence="1">DXP synthase</shortName>
        <shortName evidence="1">DXPS</shortName>
    </alternativeName>
</protein>
<comment type="function">
    <text evidence="1">Catalyzes the acyloin condensation reaction between C atoms 2 and 3 of pyruvate and glyceraldehyde 3-phosphate to yield 1-deoxy-D-xylulose-5-phosphate (DXP).</text>
</comment>
<comment type="catalytic activity">
    <reaction evidence="1">
        <text>D-glyceraldehyde 3-phosphate + pyruvate + H(+) = 1-deoxy-D-xylulose 5-phosphate + CO2</text>
        <dbReference type="Rhea" id="RHEA:12605"/>
        <dbReference type="ChEBI" id="CHEBI:15361"/>
        <dbReference type="ChEBI" id="CHEBI:15378"/>
        <dbReference type="ChEBI" id="CHEBI:16526"/>
        <dbReference type="ChEBI" id="CHEBI:57792"/>
        <dbReference type="ChEBI" id="CHEBI:59776"/>
        <dbReference type="EC" id="2.2.1.7"/>
    </reaction>
</comment>
<comment type="cofactor">
    <cofactor evidence="1">
        <name>Mg(2+)</name>
        <dbReference type="ChEBI" id="CHEBI:18420"/>
    </cofactor>
    <text evidence="1">Binds 1 Mg(2+) ion per subunit.</text>
</comment>
<comment type="cofactor">
    <cofactor evidence="1">
        <name>thiamine diphosphate</name>
        <dbReference type="ChEBI" id="CHEBI:58937"/>
    </cofactor>
    <text evidence="1">Binds 1 thiamine pyrophosphate per subunit.</text>
</comment>
<comment type="pathway">
    <text evidence="1">Metabolic intermediate biosynthesis; 1-deoxy-D-xylulose 5-phosphate biosynthesis; 1-deoxy-D-xylulose 5-phosphate from D-glyceraldehyde 3-phosphate and pyruvate: step 1/1.</text>
</comment>
<comment type="subunit">
    <text evidence="1">Homodimer.</text>
</comment>
<comment type="similarity">
    <text evidence="1">Belongs to the transketolase family. DXPS subfamily.</text>
</comment>
<name>DXS_RUEST</name>
<evidence type="ECO:0000255" key="1">
    <source>
        <dbReference type="HAMAP-Rule" id="MF_00315"/>
    </source>
</evidence>
<dbReference type="EC" id="2.2.1.7" evidence="1"/>
<dbReference type="EMBL" id="CP000377">
    <property type="protein sequence ID" value="ABF65652.1"/>
    <property type="molecule type" value="Genomic_DNA"/>
</dbReference>
<dbReference type="RefSeq" id="WP_011540233.1">
    <property type="nucleotide sequence ID" value="NC_008044.1"/>
</dbReference>
<dbReference type="SMR" id="Q1GCG4"/>
<dbReference type="STRING" id="292414.TM1040_2920"/>
<dbReference type="KEGG" id="sit:TM1040_2920"/>
<dbReference type="eggNOG" id="COG1154">
    <property type="taxonomic scope" value="Bacteria"/>
</dbReference>
<dbReference type="HOGENOM" id="CLU_009227_1_4_5"/>
<dbReference type="OrthoDB" id="9803371at2"/>
<dbReference type="UniPathway" id="UPA00064">
    <property type="reaction ID" value="UER00091"/>
</dbReference>
<dbReference type="Proteomes" id="UP000000636">
    <property type="component" value="Chromosome"/>
</dbReference>
<dbReference type="GO" id="GO:0008661">
    <property type="term" value="F:1-deoxy-D-xylulose-5-phosphate synthase activity"/>
    <property type="evidence" value="ECO:0007669"/>
    <property type="project" value="UniProtKB-UniRule"/>
</dbReference>
<dbReference type="GO" id="GO:0000287">
    <property type="term" value="F:magnesium ion binding"/>
    <property type="evidence" value="ECO:0007669"/>
    <property type="project" value="UniProtKB-UniRule"/>
</dbReference>
<dbReference type="GO" id="GO:0030976">
    <property type="term" value="F:thiamine pyrophosphate binding"/>
    <property type="evidence" value="ECO:0007669"/>
    <property type="project" value="UniProtKB-UniRule"/>
</dbReference>
<dbReference type="GO" id="GO:0052865">
    <property type="term" value="P:1-deoxy-D-xylulose 5-phosphate biosynthetic process"/>
    <property type="evidence" value="ECO:0007669"/>
    <property type="project" value="UniProtKB-UniPathway"/>
</dbReference>
<dbReference type="GO" id="GO:0019682">
    <property type="term" value="P:glyceraldehyde-3-phosphate metabolic process"/>
    <property type="evidence" value="ECO:0007669"/>
    <property type="project" value="UniProtKB-ARBA"/>
</dbReference>
<dbReference type="GO" id="GO:0016114">
    <property type="term" value="P:terpenoid biosynthetic process"/>
    <property type="evidence" value="ECO:0007669"/>
    <property type="project" value="UniProtKB-UniRule"/>
</dbReference>
<dbReference type="GO" id="GO:0009228">
    <property type="term" value="P:thiamine biosynthetic process"/>
    <property type="evidence" value="ECO:0007669"/>
    <property type="project" value="UniProtKB-UniRule"/>
</dbReference>
<dbReference type="CDD" id="cd02007">
    <property type="entry name" value="TPP_DXS"/>
    <property type="match status" value="1"/>
</dbReference>
<dbReference type="CDD" id="cd07033">
    <property type="entry name" value="TPP_PYR_DXS_TK_like"/>
    <property type="match status" value="1"/>
</dbReference>
<dbReference type="FunFam" id="3.40.50.920:FF:000002">
    <property type="entry name" value="1-deoxy-D-xylulose-5-phosphate synthase"/>
    <property type="match status" value="1"/>
</dbReference>
<dbReference type="FunFam" id="3.40.50.970:FF:000005">
    <property type="entry name" value="1-deoxy-D-xylulose-5-phosphate synthase"/>
    <property type="match status" value="1"/>
</dbReference>
<dbReference type="Gene3D" id="3.40.50.920">
    <property type="match status" value="1"/>
</dbReference>
<dbReference type="Gene3D" id="3.40.50.970">
    <property type="match status" value="2"/>
</dbReference>
<dbReference type="HAMAP" id="MF_00315">
    <property type="entry name" value="DXP_synth"/>
    <property type="match status" value="1"/>
</dbReference>
<dbReference type="InterPro" id="IPR005477">
    <property type="entry name" value="Dxylulose-5-P_synthase"/>
</dbReference>
<dbReference type="InterPro" id="IPR029061">
    <property type="entry name" value="THDP-binding"/>
</dbReference>
<dbReference type="InterPro" id="IPR009014">
    <property type="entry name" value="Transketo_C/PFOR_II"/>
</dbReference>
<dbReference type="InterPro" id="IPR005475">
    <property type="entry name" value="Transketolase-like_Pyr-bd"/>
</dbReference>
<dbReference type="InterPro" id="IPR020826">
    <property type="entry name" value="Transketolase_BS"/>
</dbReference>
<dbReference type="InterPro" id="IPR033248">
    <property type="entry name" value="Transketolase_C"/>
</dbReference>
<dbReference type="InterPro" id="IPR049557">
    <property type="entry name" value="Transketolase_CS"/>
</dbReference>
<dbReference type="NCBIfam" id="TIGR00204">
    <property type="entry name" value="dxs"/>
    <property type="match status" value="1"/>
</dbReference>
<dbReference type="NCBIfam" id="NF003933">
    <property type="entry name" value="PRK05444.2-2"/>
    <property type="match status" value="1"/>
</dbReference>
<dbReference type="PANTHER" id="PTHR43322">
    <property type="entry name" value="1-D-DEOXYXYLULOSE 5-PHOSPHATE SYNTHASE-RELATED"/>
    <property type="match status" value="1"/>
</dbReference>
<dbReference type="PANTHER" id="PTHR43322:SF5">
    <property type="entry name" value="1-DEOXY-D-XYLULOSE-5-PHOSPHATE SYNTHASE, CHLOROPLASTIC"/>
    <property type="match status" value="1"/>
</dbReference>
<dbReference type="Pfam" id="PF13292">
    <property type="entry name" value="DXP_synthase_N"/>
    <property type="match status" value="1"/>
</dbReference>
<dbReference type="Pfam" id="PF02779">
    <property type="entry name" value="Transket_pyr"/>
    <property type="match status" value="1"/>
</dbReference>
<dbReference type="Pfam" id="PF02780">
    <property type="entry name" value="Transketolase_C"/>
    <property type="match status" value="1"/>
</dbReference>
<dbReference type="SMART" id="SM00861">
    <property type="entry name" value="Transket_pyr"/>
    <property type="match status" value="1"/>
</dbReference>
<dbReference type="SUPFAM" id="SSF52518">
    <property type="entry name" value="Thiamin diphosphate-binding fold (THDP-binding)"/>
    <property type="match status" value="2"/>
</dbReference>
<dbReference type="SUPFAM" id="SSF52922">
    <property type="entry name" value="TK C-terminal domain-like"/>
    <property type="match status" value="1"/>
</dbReference>
<dbReference type="PROSITE" id="PS00801">
    <property type="entry name" value="TRANSKETOLASE_1"/>
    <property type="match status" value="1"/>
</dbReference>
<dbReference type="PROSITE" id="PS00802">
    <property type="entry name" value="TRANSKETOLASE_2"/>
    <property type="match status" value="1"/>
</dbReference>